<dbReference type="EC" id="2.7.2.3" evidence="1"/>
<dbReference type="EMBL" id="AM942444">
    <property type="protein sequence ID" value="CAQ04952.1"/>
    <property type="molecule type" value="Genomic_DNA"/>
</dbReference>
<dbReference type="RefSeq" id="WP_012360240.1">
    <property type="nucleotide sequence ID" value="NC_010545.1"/>
</dbReference>
<dbReference type="SMR" id="B1VDQ4"/>
<dbReference type="STRING" id="504474.cu0992"/>
<dbReference type="GeneID" id="60603770"/>
<dbReference type="KEGG" id="cur:cu0992"/>
<dbReference type="eggNOG" id="COG0126">
    <property type="taxonomic scope" value="Bacteria"/>
</dbReference>
<dbReference type="HOGENOM" id="CLU_025427_0_2_11"/>
<dbReference type="UniPathway" id="UPA00109">
    <property type="reaction ID" value="UER00185"/>
</dbReference>
<dbReference type="Proteomes" id="UP000001727">
    <property type="component" value="Chromosome"/>
</dbReference>
<dbReference type="GO" id="GO:0005829">
    <property type="term" value="C:cytosol"/>
    <property type="evidence" value="ECO:0007669"/>
    <property type="project" value="TreeGrafter"/>
</dbReference>
<dbReference type="GO" id="GO:0043531">
    <property type="term" value="F:ADP binding"/>
    <property type="evidence" value="ECO:0007669"/>
    <property type="project" value="TreeGrafter"/>
</dbReference>
<dbReference type="GO" id="GO:0005524">
    <property type="term" value="F:ATP binding"/>
    <property type="evidence" value="ECO:0007669"/>
    <property type="project" value="UniProtKB-KW"/>
</dbReference>
<dbReference type="GO" id="GO:0004618">
    <property type="term" value="F:phosphoglycerate kinase activity"/>
    <property type="evidence" value="ECO:0007669"/>
    <property type="project" value="UniProtKB-UniRule"/>
</dbReference>
<dbReference type="GO" id="GO:0006094">
    <property type="term" value="P:gluconeogenesis"/>
    <property type="evidence" value="ECO:0007669"/>
    <property type="project" value="TreeGrafter"/>
</dbReference>
<dbReference type="GO" id="GO:0006096">
    <property type="term" value="P:glycolytic process"/>
    <property type="evidence" value="ECO:0007669"/>
    <property type="project" value="UniProtKB-UniRule"/>
</dbReference>
<dbReference type="CDD" id="cd00318">
    <property type="entry name" value="Phosphoglycerate_kinase"/>
    <property type="match status" value="1"/>
</dbReference>
<dbReference type="FunFam" id="3.40.50.1260:FF:000003">
    <property type="entry name" value="Phosphoglycerate kinase"/>
    <property type="match status" value="1"/>
</dbReference>
<dbReference type="FunFam" id="3.40.50.1260:FF:000006">
    <property type="entry name" value="Phosphoglycerate kinase"/>
    <property type="match status" value="1"/>
</dbReference>
<dbReference type="Gene3D" id="3.40.50.1260">
    <property type="entry name" value="Phosphoglycerate kinase, N-terminal domain"/>
    <property type="match status" value="2"/>
</dbReference>
<dbReference type="HAMAP" id="MF_00145">
    <property type="entry name" value="Phosphoglyc_kinase"/>
    <property type="match status" value="1"/>
</dbReference>
<dbReference type="InterPro" id="IPR001576">
    <property type="entry name" value="Phosphoglycerate_kinase"/>
</dbReference>
<dbReference type="InterPro" id="IPR015911">
    <property type="entry name" value="Phosphoglycerate_kinase_CS"/>
</dbReference>
<dbReference type="InterPro" id="IPR015824">
    <property type="entry name" value="Phosphoglycerate_kinase_N"/>
</dbReference>
<dbReference type="InterPro" id="IPR036043">
    <property type="entry name" value="Phosphoglycerate_kinase_sf"/>
</dbReference>
<dbReference type="PANTHER" id="PTHR11406">
    <property type="entry name" value="PHOSPHOGLYCERATE KINASE"/>
    <property type="match status" value="1"/>
</dbReference>
<dbReference type="PANTHER" id="PTHR11406:SF23">
    <property type="entry name" value="PHOSPHOGLYCERATE KINASE 1, CHLOROPLASTIC-RELATED"/>
    <property type="match status" value="1"/>
</dbReference>
<dbReference type="Pfam" id="PF00162">
    <property type="entry name" value="PGK"/>
    <property type="match status" value="1"/>
</dbReference>
<dbReference type="PIRSF" id="PIRSF000724">
    <property type="entry name" value="Pgk"/>
    <property type="match status" value="1"/>
</dbReference>
<dbReference type="PRINTS" id="PR00477">
    <property type="entry name" value="PHGLYCKINASE"/>
</dbReference>
<dbReference type="SUPFAM" id="SSF53748">
    <property type="entry name" value="Phosphoglycerate kinase"/>
    <property type="match status" value="1"/>
</dbReference>
<dbReference type="PROSITE" id="PS00111">
    <property type="entry name" value="PGLYCERATE_KINASE"/>
    <property type="match status" value="1"/>
</dbReference>
<accession>B1VDQ4</accession>
<feature type="chain" id="PRO_1000096335" description="Phosphoglycerate kinase">
    <location>
        <begin position="1"/>
        <end position="402"/>
    </location>
</feature>
<feature type="binding site" evidence="1">
    <location>
        <begin position="24"/>
        <end position="26"/>
    </location>
    <ligand>
        <name>substrate</name>
    </ligand>
</feature>
<feature type="binding site" evidence="1">
    <location>
        <position position="39"/>
    </location>
    <ligand>
        <name>substrate</name>
    </ligand>
</feature>
<feature type="binding site" evidence="1">
    <location>
        <begin position="62"/>
        <end position="65"/>
    </location>
    <ligand>
        <name>substrate</name>
    </ligand>
</feature>
<feature type="binding site" evidence="1">
    <location>
        <position position="121"/>
    </location>
    <ligand>
        <name>substrate</name>
    </ligand>
</feature>
<feature type="binding site" evidence="1">
    <location>
        <position position="161"/>
    </location>
    <ligand>
        <name>substrate</name>
    </ligand>
</feature>
<feature type="binding site" evidence="1">
    <location>
        <position position="211"/>
    </location>
    <ligand>
        <name>ATP</name>
        <dbReference type="ChEBI" id="CHEBI:30616"/>
    </ligand>
</feature>
<feature type="binding site" evidence="1">
    <location>
        <position position="299"/>
    </location>
    <ligand>
        <name>ATP</name>
        <dbReference type="ChEBI" id="CHEBI:30616"/>
    </ligand>
</feature>
<feature type="binding site" evidence="1">
    <location>
        <position position="330"/>
    </location>
    <ligand>
        <name>ATP</name>
        <dbReference type="ChEBI" id="CHEBI:30616"/>
    </ligand>
</feature>
<feature type="binding site" evidence="1">
    <location>
        <begin position="359"/>
        <end position="362"/>
    </location>
    <ligand>
        <name>ATP</name>
        <dbReference type="ChEBI" id="CHEBI:30616"/>
    </ligand>
</feature>
<proteinExistence type="inferred from homology"/>
<keyword id="KW-0067">ATP-binding</keyword>
<keyword id="KW-0963">Cytoplasm</keyword>
<keyword id="KW-0324">Glycolysis</keyword>
<keyword id="KW-0418">Kinase</keyword>
<keyword id="KW-0547">Nucleotide-binding</keyword>
<keyword id="KW-1185">Reference proteome</keyword>
<keyword id="KW-0808">Transferase</keyword>
<gene>
    <name evidence="1" type="primary">pgk</name>
    <name type="ordered locus">cu0992</name>
</gene>
<organism>
    <name type="scientific">Corynebacterium urealyticum (strain ATCC 43042 / DSM 7109)</name>
    <dbReference type="NCBI Taxonomy" id="504474"/>
    <lineage>
        <taxon>Bacteria</taxon>
        <taxon>Bacillati</taxon>
        <taxon>Actinomycetota</taxon>
        <taxon>Actinomycetes</taxon>
        <taxon>Mycobacteriales</taxon>
        <taxon>Corynebacteriaceae</taxon>
        <taxon>Corynebacterium</taxon>
    </lineage>
</organism>
<evidence type="ECO:0000255" key="1">
    <source>
        <dbReference type="HAMAP-Rule" id="MF_00145"/>
    </source>
</evidence>
<name>PGK_CORU7</name>
<sequence>MAVKTLKDLLAEGVEGRHVLVRSDLNVPLADGEITDPGRIDASIPTLRALLDEGARVIVAAHLGRPKGEVDPELSLAPVAEALAERLDQWVPLAGDVTGEDAHERANGLDDGDILLLENVRFDPRETSKDASERAEFAAELAELTADNGAFVSDGFGVVHREQASVYDVAKKLPSYAGGLVSAELEVLEKVSGAPEAPYAVVLGGSKVSDKLGVIEALAPKVDRLIIGGGMCFTFLAAQGHDVGGSLLQEDMIDTCKDLLERYGDVIVLPTDVVAAENFSKDAEHKAVGLSEIPSGWMGLDIGPESADAFAAVLGEAKTVFWNGPMGVFEFPAFAAGTKAVAEAIIKATDAGAFSVVGGGDSAAAVRTLGLDEKGFSHISTGGGASLEFLEGKTLPGVEVLG</sequence>
<reference key="1">
    <citation type="journal article" date="2008" name="J. Biotechnol.">
        <title>The lifestyle of Corynebacterium urealyticum derived from its complete genome sequence established by pyrosequencing.</title>
        <authorList>
            <person name="Tauch A."/>
            <person name="Trost E."/>
            <person name="Tilker A."/>
            <person name="Ludewig U."/>
            <person name="Schneiker S."/>
            <person name="Goesmann A."/>
            <person name="Arnold W."/>
            <person name="Bekel T."/>
            <person name="Brinkrolf K."/>
            <person name="Brune I."/>
            <person name="Goetker S."/>
            <person name="Kalinowski J."/>
            <person name="Kamp P.-B."/>
            <person name="Lobo F.P."/>
            <person name="Viehoever P."/>
            <person name="Weisshaar B."/>
            <person name="Soriano F."/>
            <person name="Droege M."/>
            <person name="Puehler A."/>
        </authorList>
    </citation>
    <scope>NUCLEOTIDE SEQUENCE [LARGE SCALE GENOMIC DNA]</scope>
    <source>
        <strain>ATCC 43042 / DSM 7109</strain>
    </source>
</reference>
<comment type="catalytic activity">
    <reaction evidence="1">
        <text>(2R)-3-phosphoglycerate + ATP = (2R)-3-phospho-glyceroyl phosphate + ADP</text>
        <dbReference type="Rhea" id="RHEA:14801"/>
        <dbReference type="ChEBI" id="CHEBI:30616"/>
        <dbReference type="ChEBI" id="CHEBI:57604"/>
        <dbReference type="ChEBI" id="CHEBI:58272"/>
        <dbReference type="ChEBI" id="CHEBI:456216"/>
        <dbReference type="EC" id="2.7.2.3"/>
    </reaction>
</comment>
<comment type="pathway">
    <text evidence="1">Carbohydrate degradation; glycolysis; pyruvate from D-glyceraldehyde 3-phosphate: step 2/5.</text>
</comment>
<comment type="subunit">
    <text evidence="1">Monomer.</text>
</comment>
<comment type="subcellular location">
    <subcellularLocation>
        <location evidence="1">Cytoplasm</location>
    </subcellularLocation>
</comment>
<comment type="similarity">
    <text evidence="1">Belongs to the phosphoglycerate kinase family.</text>
</comment>
<protein>
    <recommendedName>
        <fullName evidence="1">Phosphoglycerate kinase</fullName>
        <ecNumber evidence="1">2.7.2.3</ecNumber>
    </recommendedName>
</protein>